<keyword id="KW-1185">Reference proteome</keyword>
<gene>
    <name type="ordered locus">At5g16285</name>
    <name type="ORF">T21H19</name>
</gene>
<accession>Q3E9H1</accession>
<name>FB259_ARATH</name>
<sequence>MRIESLLQHDVVERILERLAVNSLPRFKAVSKQWKSTIESQFFQGKHLTHRQQSGDPVVLMVTVYNDDSPHVGSLLLGSRRTRNPTTLII</sequence>
<feature type="chain" id="PRO_0000283526" description="Putative F-box protein At5g16285">
    <location>
        <begin position="1"/>
        <end position="90"/>
    </location>
</feature>
<feature type="domain" description="F-box">
    <location>
        <begin position="1"/>
        <end position="46"/>
    </location>
</feature>
<reference key="1">
    <citation type="journal article" date="2000" name="Nature">
        <title>Sequence and analysis of chromosome 5 of the plant Arabidopsis thaliana.</title>
        <authorList>
            <person name="Tabata S."/>
            <person name="Kaneko T."/>
            <person name="Nakamura Y."/>
            <person name="Kotani H."/>
            <person name="Kato T."/>
            <person name="Asamizu E."/>
            <person name="Miyajima N."/>
            <person name="Sasamoto S."/>
            <person name="Kimura T."/>
            <person name="Hosouchi T."/>
            <person name="Kawashima K."/>
            <person name="Kohara M."/>
            <person name="Matsumoto M."/>
            <person name="Matsuno A."/>
            <person name="Muraki A."/>
            <person name="Nakayama S."/>
            <person name="Nakazaki N."/>
            <person name="Naruo K."/>
            <person name="Okumura S."/>
            <person name="Shinpo S."/>
            <person name="Takeuchi C."/>
            <person name="Wada T."/>
            <person name="Watanabe A."/>
            <person name="Yamada M."/>
            <person name="Yasuda M."/>
            <person name="Sato S."/>
            <person name="de la Bastide M."/>
            <person name="Huang E."/>
            <person name="Spiegel L."/>
            <person name="Gnoj L."/>
            <person name="O'Shaughnessy A."/>
            <person name="Preston R."/>
            <person name="Habermann K."/>
            <person name="Murray J."/>
            <person name="Johnson D."/>
            <person name="Rohlfing T."/>
            <person name="Nelson J."/>
            <person name="Stoneking T."/>
            <person name="Pepin K."/>
            <person name="Spieth J."/>
            <person name="Sekhon M."/>
            <person name="Armstrong J."/>
            <person name="Becker M."/>
            <person name="Belter E."/>
            <person name="Cordum H."/>
            <person name="Cordes M."/>
            <person name="Courtney L."/>
            <person name="Courtney W."/>
            <person name="Dante M."/>
            <person name="Du H."/>
            <person name="Edwards J."/>
            <person name="Fryman J."/>
            <person name="Haakensen B."/>
            <person name="Lamar E."/>
            <person name="Latreille P."/>
            <person name="Leonard S."/>
            <person name="Meyer R."/>
            <person name="Mulvaney E."/>
            <person name="Ozersky P."/>
            <person name="Riley A."/>
            <person name="Strowmatt C."/>
            <person name="Wagner-McPherson C."/>
            <person name="Wollam A."/>
            <person name="Yoakum M."/>
            <person name="Bell M."/>
            <person name="Dedhia N."/>
            <person name="Parnell L."/>
            <person name="Shah R."/>
            <person name="Rodriguez M."/>
            <person name="Hoon See L."/>
            <person name="Vil D."/>
            <person name="Baker J."/>
            <person name="Kirchoff K."/>
            <person name="Toth K."/>
            <person name="King L."/>
            <person name="Bahret A."/>
            <person name="Miller B."/>
            <person name="Marra M.A."/>
            <person name="Martienssen R."/>
            <person name="McCombie W.R."/>
            <person name="Wilson R.K."/>
            <person name="Murphy G."/>
            <person name="Bancroft I."/>
            <person name="Volckaert G."/>
            <person name="Wambutt R."/>
            <person name="Duesterhoeft A."/>
            <person name="Stiekema W."/>
            <person name="Pohl T."/>
            <person name="Entian K.-D."/>
            <person name="Terryn N."/>
            <person name="Hartley N."/>
            <person name="Bent E."/>
            <person name="Johnson S."/>
            <person name="Langham S.-A."/>
            <person name="McCullagh B."/>
            <person name="Robben J."/>
            <person name="Grymonprez B."/>
            <person name="Zimmermann W."/>
            <person name="Ramsperger U."/>
            <person name="Wedler H."/>
            <person name="Balke K."/>
            <person name="Wedler E."/>
            <person name="Peters S."/>
            <person name="van Staveren M."/>
            <person name="Dirkse W."/>
            <person name="Mooijman P."/>
            <person name="Klein Lankhorst R."/>
            <person name="Weitzenegger T."/>
            <person name="Bothe G."/>
            <person name="Rose M."/>
            <person name="Hauf J."/>
            <person name="Berneiser S."/>
            <person name="Hempel S."/>
            <person name="Feldpausch M."/>
            <person name="Lamberth S."/>
            <person name="Villarroel R."/>
            <person name="Gielen J."/>
            <person name="Ardiles W."/>
            <person name="Bents O."/>
            <person name="Lemcke K."/>
            <person name="Kolesov G."/>
            <person name="Mayer K.F.X."/>
            <person name="Rudd S."/>
            <person name="Schoof H."/>
            <person name="Schueller C."/>
            <person name="Zaccaria P."/>
            <person name="Mewes H.-W."/>
            <person name="Bevan M."/>
            <person name="Fransz P.F."/>
        </authorList>
    </citation>
    <scope>NUCLEOTIDE SEQUENCE [LARGE SCALE GENOMIC DNA]</scope>
    <source>
        <strain>cv. Columbia</strain>
    </source>
</reference>
<reference key="2">
    <citation type="journal article" date="2017" name="Plant J.">
        <title>Araport11: a complete reannotation of the Arabidopsis thaliana reference genome.</title>
        <authorList>
            <person name="Cheng C.Y."/>
            <person name="Krishnakumar V."/>
            <person name="Chan A.P."/>
            <person name="Thibaud-Nissen F."/>
            <person name="Schobel S."/>
            <person name="Town C.D."/>
        </authorList>
    </citation>
    <scope>GENOME REANNOTATION</scope>
    <source>
        <strain>cv. Columbia</strain>
    </source>
</reference>
<proteinExistence type="predicted"/>
<protein>
    <recommendedName>
        <fullName>Putative F-box protein At5g16285</fullName>
    </recommendedName>
</protein>
<dbReference type="EMBL" id="AL391148">
    <property type="status" value="NOT_ANNOTATED_CDS"/>
    <property type="molecule type" value="Genomic_DNA"/>
</dbReference>
<dbReference type="EMBL" id="CP002688">
    <property type="protein sequence ID" value="AED92270.1"/>
    <property type="molecule type" value="Genomic_DNA"/>
</dbReference>
<dbReference type="RefSeq" id="NP_680169.1">
    <property type="nucleotide sequence ID" value="NM_147864.1"/>
</dbReference>
<dbReference type="SMR" id="Q3E9H1"/>
<dbReference type="FunCoup" id="Q3E9H1">
    <property type="interactions" value="22"/>
</dbReference>
<dbReference type="STRING" id="3702.Q3E9H1"/>
<dbReference type="PaxDb" id="3702-AT5G16285.1"/>
<dbReference type="EnsemblPlants" id="AT5G16285.1">
    <property type="protein sequence ID" value="AT5G16285.1"/>
    <property type="gene ID" value="AT5G16285"/>
</dbReference>
<dbReference type="GeneID" id="831489"/>
<dbReference type="Gramene" id="AT5G16285.1">
    <property type="protein sequence ID" value="AT5G16285.1"/>
    <property type="gene ID" value="AT5G16285"/>
</dbReference>
<dbReference type="KEGG" id="ath:AT5G16285"/>
<dbReference type="Araport" id="AT5G16285"/>
<dbReference type="TAIR" id="AT5G16285"/>
<dbReference type="HOGENOM" id="CLU_2443864_0_0_1"/>
<dbReference type="InParanoid" id="Q3E9H1"/>
<dbReference type="OMA" id="MWTIESQ"/>
<dbReference type="OrthoDB" id="1113741at2759"/>
<dbReference type="PhylomeDB" id="Q3E9H1"/>
<dbReference type="PRO" id="PR:Q3E9H1"/>
<dbReference type="Proteomes" id="UP000006548">
    <property type="component" value="Chromosome 5"/>
</dbReference>
<dbReference type="Gene3D" id="1.20.1280.50">
    <property type="match status" value="1"/>
</dbReference>
<dbReference type="InterPro" id="IPR036047">
    <property type="entry name" value="F-box-like_dom_sf"/>
</dbReference>
<dbReference type="InterPro" id="IPR001810">
    <property type="entry name" value="F-box_dom"/>
</dbReference>
<dbReference type="Pfam" id="PF00646">
    <property type="entry name" value="F-box"/>
    <property type="match status" value="1"/>
</dbReference>
<dbReference type="SUPFAM" id="SSF81383">
    <property type="entry name" value="F-box domain"/>
    <property type="match status" value="1"/>
</dbReference>
<organism>
    <name type="scientific">Arabidopsis thaliana</name>
    <name type="common">Mouse-ear cress</name>
    <dbReference type="NCBI Taxonomy" id="3702"/>
    <lineage>
        <taxon>Eukaryota</taxon>
        <taxon>Viridiplantae</taxon>
        <taxon>Streptophyta</taxon>
        <taxon>Embryophyta</taxon>
        <taxon>Tracheophyta</taxon>
        <taxon>Spermatophyta</taxon>
        <taxon>Magnoliopsida</taxon>
        <taxon>eudicotyledons</taxon>
        <taxon>Gunneridae</taxon>
        <taxon>Pentapetalae</taxon>
        <taxon>rosids</taxon>
        <taxon>malvids</taxon>
        <taxon>Brassicales</taxon>
        <taxon>Brassicaceae</taxon>
        <taxon>Camelineae</taxon>
        <taxon>Arabidopsis</taxon>
    </lineage>
</organism>